<comment type="function">
    <text evidence="1">Dephosphorylates the 5' and 2'(3')-phosphates of deoxyribonucleotides, with a preference for dUMP and dTMP, intermediate activity towards dGMP, and low activity towards dCMP and dAMP.</text>
</comment>
<comment type="cofactor">
    <cofactor evidence="2">
        <name>Mg(2+)</name>
        <dbReference type="ChEBI" id="CHEBI:18420"/>
    </cofactor>
</comment>
<comment type="biophysicochemical properties">
    <kinetics>
        <KM evidence="1">0.42 mM for dUMP-5'</KM>
        <KM evidence="1">1.25 mM for dTMP-5'</KM>
        <KM evidence="1">1.2 mM for dGMP-5'</KM>
        <KM evidence="1">1 mM for dAMP-5'</KM>
        <KM evidence="1">3.6 mM for dCMP-5'</KM>
        <KM evidence="1">0.4 mM for UMP-3</KM>
    </kinetics>
</comment>
<comment type="subunit">
    <text evidence="2">Homodimer.</text>
</comment>
<comment type="subcellular location">
    <subcellularLocation>
        <location evidence="1">Cytoplasm</location>
    </subcellularLocation>
</comment>
<comment type="similarity">
    <text evidence="3">Belongs to the 5'(3')-deoxyribonucleotidase family.</text>
</comment>
<accession>Q9JM14</accession>
<protein>
    <recommendedName>
        <fullName>5'(3')-deoxyribonucleotidase, cytosolic type</fullName>
        <ecNumber evidence="1">3.1.3.-</ecNumber>
    </recommendedName>
    <alternativeName>
        <fullName>Cytosolic 5',3'-pyrimidine nucleotidase</fullName>
    </alternativeName>
    <alternativeName>
        <fullName>Deoxy-5'-nucleotidase 1</fullName>
        <shortName>dNT-1</shortName>
    </alternativeName>
</protein>
<gene>
    <name type="primary">Nt5c</name>
    <name type="synonym">Dnt1</name>
</gene>
<proteinExistence type="evidence at protein level"/>
<keyword id="KW-0002">3D-structure</keyword>
<keyword id="KW-0963">Cytoplasm</keyword>
<keyword id="KW-0378">Hydrolase</keyword>
<keyword id="KW-0460">Magnesium</keyword>
<keyword id="KW-0479">Metal-binding</keyword>
<keyword id="KW-0546">Nucleotide metabolism</keyword>
<keyword id="KW-0547">Nucleotide-binding</keyword>
<keyword id="KW-0597">Phosphoprotein</keyword>
<keyword id="KW-1185">Reference proteome</keyword>
<name>NT5C_MOUSE</name>
<feature type="chain" id="PRO_0000164372" description="5'(3')-deoxyribonucleotidase, cytosolic type">
    <location>
        <begin position="1"/>
        <end position="200"/>
    </location>
</feature>
<feature type="active site" description="Nucleophile" evidence="3">
    <location>
        <position position="12"/>
    </location>
</feature>
<feature type="active site" description="Proton donor" evidence="3">
    <location>
        <position position="14"/>
    </location>
</feature>
<feature type="binding site">
    <location>
        <position position="12"/>
    </location>
    <ligand>
        <name>Mg(2+)</name>
        <dbReference type="ChEBI" id="CHEBI:18420"/>
    </ligand>
</feature>
<feature type="binding site">
    <location>
        <position position="14"/>
    </location>
    <ligand>
        <name>Mg(2+)</name>
        <dbReference type="ChEBI" id="CHEBI:18420"/>
    </ligand>
</feature>
<feature type="binding site">
    <location>
        <position position="20"/>
    </location>
    <ligand>
        <name>substrate</name>
    </ligand>
</feature>
<feature type="binding site">
    <location>
        <position position="46"/>
    </location>
    <ligand>
        <name>substrate</name>
    </ligand>
</feature>
<feature type="binding site">
    <location>
        <position position="67"/>
    </location>
    <ligand>
        <name>substrate</name>
    </ligand>
</feature>
<feature type="binding site">
    <location>
        <position position="101"/>
    </location>
    <ligand>
        <name>substrate</name>
    </ligand>
</feature>
<feature type="binding site">
    <location>
        <position position="136"/>
    </location>
    <ligand>
        <name>substrate</name>
    </ligand>
</feature>
<feature type="binding site">
    <location>
        <position position="147"/>
    </location>
    <ligand>
        <name>Mg(2+)</name>
        <dbReference type="ChEBI" id="CHEBI:18420"/>
    </ligand>
</feature>
<feature type="modified residue" description="Phosphothreonine" evidence="4">
    <location>
        <position position="102"/>
    </location>
</feature>
<feature type="modified residue" description="Phosphoserine" evidence="4">
    <location>
        <position position="184"/>
    </location>
</feature>
<feature type="strand" evidence="5">
    <location>
        <begin position="7"/>
        <end position="14"/>
    </location>
</feature>
<feature type="turn" evidence="5">
    <location>
        <begin position="15"/>
        <end position="17"/>
    </location>
</feature>
<feature type="helix" evidence="5">
    <location>
        <begin position="20"/>
        <end position="31"/>
    </location>
</feature>
<feature type="helix" evidence="5">
    <location>
        <begin position="40"/>
        <end position="42"/>
    </location>
</feature>
<feature type="helix" evidence="5">
    <location>
        <begin position="48"/>
        <end position="55"/>
    </location>
</feature>
<feature type="helix" evidence="5">
    <location>
        <begin position="59"/>
        <end position="67"/>
    </location>
</feature>
<feature type="turn" evidence="5">
    <location>
        <begin position="70"/>
        <end position="75"/>
    </location>
</feature>
<feature type="helix" evidence="5">
    <location>
        <begin position="82"/>
        <end position="90"/>
    </location>
</feature>
<feature type="strand" evidence="5">
    <location>
        <begin position="95"/>
        <end position="101"/>
    </location>
</feature>
<feature type="turn" evidence="5">
    <location>
        <begin position="108"/>
        <end position="110"/>
    </location>
</feature>
<feature type="helix" evidence="5">
    <location>
        <begin position="111"/>
        <end position="121"/>
    </location>
</feature>
<feature type="helix" evidence="5">
    <location>
        <begin position="124"/>
        <end position="127"/>
    </location>
</feature>
<feature type="strand" evidence="5">
    <location>
        <begin position="130"/>
        <end position="132"/>
    </location>
</feature>
<feature type="helix" evidence="5">
    <location>
        <begin position="136"/>
        <end position="138"/>
    </location>
</feature>
<feature type="strand" evidence="5">
    <location>
        <begin position="142"/>
        <end position="147"/>
    </location>
</feature>
<feature type="strand" evidence="5">
    <location>
        <begin position="159"/>
        <end position="165"/>
    </location>
</feature>
<feature type="helix" evidence="5">
    <location>
        <begin position="168"/>
        <end position="170"/>
    </location>
</feature>
<feature type="strand" evidence="5">
    <location>
        <begin position="179"/>
        <end position="182"/>
    </location>
</feature>
<feature type="helix" evidence="5">
    <location>
        <begin position="189"/>
        <end position="197"/>
    </location>
</feature>
<dbReference type="EC" id="3.1.3.-" evidence="1"/>
<dbReference type="EMBL" id="AF078840">
    <property type="protein sequence ID" value="AAF36421.1"/>
    <property type="molecule type" value="mRNA"/>
</dbReference>
<dbReference type="EMBL" id="AK007418">
    <property type="protein sequence ID" value="BAB25027.1"/>
    <property type="molecule type" value="mRNA"/>
</dbReference>
<dbReference type="EMBL" id="BC024368">
    <property type="protein sequence ID" value="AAH24368.1"/>
    <property type="molecule type" value="mRNA"/>
</dbReference>
<dbReference type="EMBL" id="BK000208">
    <property type="protein sequence ID" value="DAA00069.1"/>
    <property type="molecule type" value="Genomic_DNA"/>
</dbReference>
<dbReference type="CCDS" id="CCDS25637.1"/>
<dbReference type="RefSeq" id="NP_056622.1">
    <property type="nucleotide sequence ID" value="NM_015807.2"/>
</dbReference>
<dbReference type="PDB" id="2JAO">
    <property type="method" value="X-ray"/>
    <property type="resolution" value="2.00 A"/>
    <property type="chains" value="A=1-200"/>
</dbReference>
<dbReference type="PDB" id="2JAR">
    <property type="method" value="X-ray"/>
    <property type="resolution" value="1.94 A"/>
    <property type="chains" value="A=1-200"/>
</dbReference>
<dbReference type="PDBsum" id="2JAO"/>
<dbReference type="PDBsum" id="2JAR"/>
<dbReference type="SMR" id="Q9JM14"/>
<dbReference type="BioGRID" id="206105">
    <property type="interactions" value="1"/>
</dbReference>
<dbReference type="FunCoup" id="Q9JM14">
    <property type="interactions" value="1638"/>
</dbReference>
<dbReference type="STRING" id="10090.ENSMUSP00000021082"/>
<dbReference type="iPTMnet" id="Q9JM14"/>
<dbReference type="PhosphoSitePlus" id="Q9JM14"/>
<dbReference type="SwissPalm" id="Q9JM14"/>
<dbReference type="REPRODUCTION-2DPAGE" id="IPI00124639"/>
<dbReference type="jPOST" id="Q9JM14"/>
<dbReference type="PaxDb" id="10090-ENSMUSP00000021082"/>
<dbReference type="PeptideAtlas" id="Q9JM14"/>
<dbReference type="ProteomicsDB" id="252862"/>
<dbReference type="Pumba" id="Q9JM14"/>
<dbReference type="Antibodypedia" id="19500">
    <property type="antibodies" value="74 antibodies from 18 providers"/>
</dbReference>
<dbReference type="DNASU" id="50773"/>
<dbReference type="Ensembl" id="ENSMUST00000021082.7">
    <property type="protein sequence ID" value="ENSMUSP00000021082.7"/>
    <property type="gene ID" value="ENSMUSG00000020736.13"/>
</dbReference>
<dbReference type="GeneID" id="50773"/>
<dbReference type="KEGG" id="mmu:50773"/>
<dbReference type="UCSC" id="uc007mhu.1">
    <property type="organism name" value="mouse"/>
</dbReference>
<dbReference type="AGR" id="MGI:1354954"/>
<dbReference type="CTD" id="30833"/>
<dbReference type="MGI" id="MGI:1354954">
    <property type="gene designation" value="Nt5c"/>
</dbReference>
<dbReference type="VEuPathDB" id="HostDB:ENSMUSG00000020736"/>
<dbReference type="eggNOG" id="ENOG502QZUW">
    <property type="taxonomic scope" value="Eukaryota"/>
</dbReference>
<dbReference type="GeneTree" id="ENSGT00390000011596"/>
<dbReference type="HOGENOM" id="CLU_100259_0_0_1"/>
<dbReference type="InParanoid" id="Q9JM14"/>
<dbReference type="OMA" id="MLHMQDT"/>
<dbReference type="OrthoDB" id="10248475at2759"/>
<dbReference type="PhylomeDB" id="Q9JM14"/>
<dbReference type="TreeFam" id="TF331117"/>
<dbReference type="BRENDA" id="3.1.3.34">
    <property type="organism ID" value="3474"/>
</dbReference>
<dbReference type="Reactome" id="R-MMU-73621">
    <property type="pathway name" value="Pyrimidine catabolism"/>
</dbReference>
<dbReference type="Reactome" id="R-MMU-74259">
    <property type="pathway name" value="Purine catabolism"/>
</dbReference>
<dbReference type="SABIO-RK" id="Q9JM14"/>
<dbReference type="BioGRID-ORCS" id="50773">
    <property type="hits" value="2 hits in 77 CRISPR screens"/>
</dbReference>
<dbReference type="ChiTaRS" id="Nt5c">
    <property type="organism name" value="mouse"/>
</dbReference>
<dbReference type="EvolutionaryTrace" id="Q9JM14"/>
<dbReference type="PRO" id="PR:Q9JM14"/>
<dbReference type="Proteomes" id="UP000000589">
    <property type="component" value="Chromosome 11"/>
</dbReference>
<dbReference type="RNAct" id="Q9JM14">
    <property type="molecule type" value="protein"/>
</dbReference>
<dbReference type="Bgee" id="ENSMUSG00000020736">
    <property type="expression patterns" value="Expressed in dorsal pancreas and 252 other cell types or tissues"/>
</dbReference>
<dbReference type="ExpressionAtlas" id="Q9JM14">
    <property type="expression patterns" value="baseline and differential"/>
</dbReference>
<dbReference type="GO" id="GO:0005829">
    <property type="term" value="C:cytosol"/>
    <property type="evidence" value="ECO:0000314"/>
    <property type="project" value="MGI"/>
</dbReference>
<dbReference type="GO" id="GO:0005739">
    <property type="term" value="C:mitochondrion"/>
    <property type="evidence" value="ECO:0007005"/>
    <property type="project" value="MGI"/>
</dbReference>
<dbReference type="GO" id="GO:0005634">
    <property type="term" value="C:nucleus"/>
    <property type="evidence" value="ECO:0007669"/>
    <property type="project" value="Ensembl"/>
</dbReference>
<dbReference type="GO" id="GO:0008253">
    <property type="term" value="F:5'-nucleotidase activity"/>
    <property type="evidence" value="ECO:0000314"/>
    <property type="project" value="MGI"/>
</dbReference>
<dbReference type="GO" id="GO:0042802">
    <property type="term" value="F:identical protein binding"/>
    <property type="evidence" value="ECO:0007669"/>
    <property type="project" value="Ensembl"/>
</dbReference>
<dbReference type="GO" id="GO:0050483">
    <property type="term" value="F:IMP 5'-nucleotidase activity"/>
    <property type="evidence" value="ECO:0000314"/>
    <property type="project" value="MGI"/>
</dbReference>
<dbReference type="GO" id="GO:0046872">
    <property type="term" value="F:metal ion binding"/>
    <property type="evidence" value="ECO:0007669"/>
    <property type="project" value="UniProtKB-KW"/>
</dbReference>
<dbReference type="GO" id="GO:0016791">
    <property type="term" value="F:phosphatase activity"/>
    <property type="evidence" value="ECO:0000314"/>
    <property type="project" value="MGI"/>
</dbReference>
<dbReference type="GO" id="GO:0019103">
    <property type="term" value="F:pyrimidine nucleotide binding"/>
    <property type="evidence" value="ECO:0007669"/>
    <property type="project" value="Ensembl"/>
</dbReference>
<dbReference type="GO" id="GO:0000255">
    <property type="term" value="P:allantoin metabolic process"/>
    <property type="evidence" value="ECO:0000314"/>
    <property type="project" value="MGI"/>
</dbReference>
<dbReference type="GO" id="GO:0043605">
    <property type="term" value="P:amide catabolic process"/>
    <property type="evidence" value="ECO:0000314"/>
    <property type="project" value="MGI"/>
</dbReference>
<dbReference type="GO" id="GO:0006249">
    <property type="term" value="P:dCMP catabolic process"/>
    <property type="evidence" value="ECO:0000314"/>
    <property type="project" value="MGI"/>
</dbReference>
<dbReference type="GO" id="GO:0009264">
    <property type="term" value="P:deoxyribonucleotide catabolic process"/>
    <property type="evidence" value="ECO:0000314"/>
    <property type="project" value="MGI"/>
</dbReference>
<dbReference type="GO" id="GO:0046055">
    <property type="term" value="P:dGMP catabolic process"/>
    <property type="evidence" value="ECO:0000314"/>
    <property type="project" value="MGI"/>
</dbReference>
<dbReference type="GO" id="GO:0046074">
    <property type="term" value="P:dTMP catabolic process"/>
    <property type="evidence" value="ECO:0000314"/>
    <property type="project" value="MGI"/>
</dbReference>
<dbReference type="GO" id="GO:0046079">
    <property type="term" value="P:dUMP catabolic process"/>
    <property type="evidence" value="ECO:0000314"/>
    <property type="project" value="MGI"/>
</dbReference>
<dbReference type="GO" id="GO:0006204">
    <property type="term" value="P:IMP catabolic process"/>
    <property type="evidence" value="ECO:0000314"/>
    <property type="project" value="MGI"/>
</dbReference>
<dbReference type="GO" id="GO:0046050">
    <property type="term" value="P:UMP catabolic process"/>
    <property type="evidence" value="ECO:0000314"/>
    <property type="project" value="MGI"/>
</dbReference>
<dbReference type="CDD" id="cd02587">
    <property type="entry name" value="HAD_5-3dNT"/>
    <property type="match status" value="1"/>
</dbReference>
<dbReference type="FunFam" id="1.10.40.40:FF:000001">
    <property type="entry name" value="5'(3')-deoxyribonucleotidase, cytosolic type"/>
    <property type="match status" value="1"/>
</dbReference>
<dbReference type="FunFam" id="3.40.50.1000:FF:000133">
    <property type="entry name" value="5'(3')-deoxyribonucleotidase, cytosolic type"/>
    <property type="match status" value="1"/>
</dbReference>
<dbReference type="Gene3D" id="1.10.40.40">
    <property type="entry name" value="Deoxyribonucleotidase, domain 2"/>
    <property type="match status" value="1"/>
</dbReference>
<dbReference type="Gene3D" id="3.40.50.1000">
    <property type="entry name" value="HAD superfamily/HAD-like"/>
    <property type="match status" value="1"/>
</dbReference>
<dbReference type="InterPro" id="IPR010708">
    <property type="entry name" value="5'(3')-deoxyribonucleotidase"/>
</dbReference>
<dbReference type="InterPro" id="IPR036412">
    <property type="entry name" value="HAD-like_sf"/>
</dbReference>
<dbReference type="InterPro" id="IPR023214">
    <property type="entry name" value="HAD_sf"/>
</dbReference>
<dbReference type="PANTHER" id="PTHR16504">
    <property type="entry name" value="5'(3')-DEOXYRIBONUCLEOTIDASE"/>
    <property type="match status" value="1"/>
</dbReference>
<dbReference type="PANTHER" id="PTHR16504:SF5">
    <property type="entry name" value="5'(3')-DEOXYRIBONUCLEOTIDASE, CYTOSOLIC TYPE"/>
    <property type="match status" value="1"/>
</dbReference>
<dbReference type="Pfam" id="PF06941">
    <property type="entry name" value="NT5C"/>
    <property type="match status" value="1"/>
</dbReference>
<dbReference type="SFLD" id="SFLDG01145">
    <property type="entry name" value="C1.2.1"/>
    <property type="match status" value="1"/>
</dbReference>
<dbReference type="SFLD" id="SFLDG01126">
    <property type="entry name" value="C1.2:_Nucleotidase_Like"/>
    <property type="match status" value="1"/>
</dbReference>
<dbReference type="SUPFAM" id="SSF56784">
    <property type="entry name" value="HAD-like"/>
    <property type="match status" value="1"/>
</dbReference>
<evidence type="ECO:0000269" key="1">
    <source>
    </source>
</evidence>
<evidence type="ECO:0000269" key="2">
    <source>
    </source>
</evidence>
<evidence type="ECO:0000305" key="3"/>
<evidence type="ECO:0007744" key="4">
    <source>
    </source>
</evidence>
<evidence type="ECO:0007829" key="5">
    <source>
        <dbReference type="PDB" id="2JAR"/>
    </source>
</evidence>
<reference key="1">
    <citation type="journal article" date="2000" name="J. Biol. Chem.">
        <title>Mammalian 5'(3')-deoxyribonucleotidase, cDNA cloning, and overexpression of the enzyme in Escherichia coli and mammalian cells.</title>
        <authorList>
            <person name="Rampazzo C."/>
            <person name="Johansson M."/>
            <person name="Gallinaro L."/>
            <person name="Ferraro P."/>
            <person name="Hellman U."/>
            <person name="Karlsson A."/>
            <person name="Reichard P."/>
            <person name="Bianchi V."/>
        </authorList>
    </citation>
    <scope>NUCLEOTIDE SEQUENCE [MRNA]</scope>
    <scope>FUNCTION</scope>
    <scope>CATALYTIC ACTIVITY</scope>
    <scope>SUBSTRATE SPECIFICITY</scope>
    <scope>BIOPHYSICOCHEMICAL PROPERTIES</scope>
    <scope>SUBCELLULAR LOCATION</scope>
    <source>
        <strain>C57BL/6J</strain>
    </source>
</reference>
<reference key="2">
    <citation type="journal article" date="2005" name="Science">
        <title>The transcriptional landscape of the mammalian genome.</title>
        <authorList>
            <person name="Carninci P."/>
            <person name="Kasukawa T."/>
            <person name="Katayama S."/>
            <person name="Gough J."/>
            <person name="Frith M.C."/>
            <person name="Maeda N."/>
            <person name="Oyama R."/>
            <person name="Ravasi T."/>
            <person name="Lenhard B."/>
            <person name="Wells C."/>
            <person name="Kodzius R."/>
            <person name="Shimokawa K."/>
            <person name="Bajic V.B."/>
            <person name="Brenner S.E."/>
            <person name="Batalov S."/>
            <person name="Forrest A.R."/>
            <person name="Zavolan M."/>
            <person name="Davis M.J."/>
            <person name="Wilming L.G."/>
            <person name="Aidinis V."/>
            <person name="Allen J.E."/>
            <person name="Ambesi-Impiombato A."/>
            <person name="Apweiler R."/>
            <person name="Aturaliya R.N."/>
            <person name="Bailey T.L."/>
            <person name="Bansal M."/>
            <person name="Baxter L."/>
            <person name="Beisel K.W."/>
            <person name="Bersano T."/>
            <person name="Bono H."/>
            <person name="Chalk A.M."/>
            <person name="Chiu K.P."/>
            <person name="Choudhary V."/>
            <person name="Christoffels A."/>
            <person name="Clutterbuck D.R."/>
            <person name="Crowe M.L."/>
            <person name="Dalla E."/>
            <person name="Dalrymple B.P."/>
            <person name="de Bono B."/>
            <person name="Della Gatta G."/>
            <person name="di Bernardo D."/>
            <person name="Down T."/>
            <person name="Engstrom P."/>
            <person name="Fagiolini M."/>
            <person name="Faulkner G."/>
            <person name="Fletcher C.F."/>
            <person name="Fukushima T."/>
            <person name="Furuno M."/>
            <person name="Futaki S."/>
            <person name="Gariboldi M."/>
            <person name="Georgii-Hemming P."/>
            <person name="Gingeras T.R."/>
            <person name="Gojobori T."/>
            <person name="Green R.E."/>
            <person name="Gustincich S."/>
            <person name="Harbers M."/>
            <person name="Hayashi Y."/>
            <person name="Hensch T.K."/>
            <person name="Hirokawa N."/>
            <person name="Hill D."/>
            <person name="Huminiecki L."/>
            <person name="Iacono M."/>
            <person name="Ikeo K."/>
            <person name="Iwama A."/>
            <person name="Ishikawa T."/>
            <person name="Jakt M."/>
            <person name="Kanapin A."/>
            <person name="Katoh M."/>
            <person name="Kawasawa Y."/>
            <person name="Kelso J."/>
            <person name="Kitamura H."/>
            <person name="Kitano H."/>
            <person name="Kollias G."/>
            <person name="Krishnan S.P."/>
            <person name="Kruger A."/>
            <person name="Kummerfeld S.K."/>
            <person name="Kurochkin I.V."/>
            <person name="Lareau L.F."/>
            <person name="Lazarevic D."/>
            <person name="Lipovich L."/>
            <person name="Liu J."/>
            <person name="Liuni S."/>
            <person name="McWilliam S."/>
            <person name="Madan Babu M."/>
            <person name="Madera M."/>
            <person name="Marchionni L."/>
            <person name="Matsuda H."/>
            <person name="Matsuzawa S."/>
            <person name="Miki H."/>
            <person name="Mignone F."/>
            <person name="Miyake S."/>
            <person name="Morris K."/>
            <person name="Mottagui-Tabar S."/>
            <person name="Mulder N."/>
            <person name="Nakano N."/>
            <person name="Nakauchi H."/>
            <person name="Ng P."/>
            <person name="Nilsson R."/>
            <person name="Nishiguchi S."/>
            <person name="Nishikawa S."/>
            <person name="Nori F."/>
            <person name="Ohara O."/>
            <person name="Okazaki Y."/>
            <person name="Orlando V."/>
            <person name="Pang K.C."/>
            <person name="Pavan W.J."/>
            <person name="Pavesi G."/>
            <person name="Pesole G."/>
            <person name="Petrovsky N."/>
            <person name="Piazza S."/>
            <person name="Reed J."/>
            <person name="Reid J.F."/>
            <person name="Ring B.Z."/>
            <person name="Ringwald M."/>
            <person name="Rost B."/>
            <person name="Ruan Y."/>
            <person name="Salzberg S.L."/>
            <person name="Sandelin A."/>
            <person name="Schneider C."/>
            <person name="Schoenbach C."/>
            <person name="Sekiguchi K."/>
            <person name="Semple C.A."/>
            <person name="Seno S."/>
            <person name="Sessa L."/>
            <person name="Sheng Y."/>
            <person name="Shibata Y."/>
            <person name="Shimada H."/>
            <person name="Shimada K."/>
            <person name="Silva D."/>
            <person name="Sinclair B."/>
            <person name="Sperling S."/>
            <person name="Stupka E."/>
            <person name="Sugiura K."/>
            <person name="Sultana R."/>
            <person name="Takenaka Y."/>
            <person name="Taki K."/>
            <person name="Tammoja K."/>
            <person name="Tan S.L."/>
            <person name="Tang S."/>
            <person name="Taylor M.S."/>
            <person name="Tegner J."/>
            <person name="Teichmann S.A."/>
            <person name="Ueda H.R."/>
            <person name="van Nimwegen E."/>
            <person name="Verardo R."/>
            <person name="Wei C.L."/>
            <person name="Yagi K."/>
            <person name="Yamanishi H."/>
            <person name="Zabarovsky E."/>
            <person name="Zhu S."/>
            <person name="Zimmer A."/>
            <person name="Hide W."/>
            <person name="Bult C."/>
            <person name="Grimmond S.M."/>
            <person name="Teasdale R.D."/>
            <person name="Liu E.T."/>
            <person name="Brusic V."/>
            <person name="Quackenbush J."/>
            <person name="Wahlestedt C."/>
            <person name="Mattick J.S."/>
            <person name="Hume D.A."/>
            <person name="Kai C."/>
            <person name="Sasaki D."/>
            <person name="Tomaru Y."/>
            <person name="Fukuda S."/>
            <person name="Kanamori-Katayama M."/>
            <person name="Suzuki M."/>
            <person name="Aoki J."/>
            <person name="Arakawa T."/>
            <person name="Iida J."/>
            <person name="Imamura K."/>
            <person name="Itoh M."/>
            <person name="Kato T."/>
            <person name="Kawaji H."/>
            <person name="Kawagashira N."/>
            <person name="Kawashima T."/>
            <person name="Kojima M."/>
            <person name="Kondo S."/>
            <person name="Konno H."/>
            <person name="Nakano K."/>
            <person name="Ninomiya N."/>
            <person name="Nishio T."/>
            <person name="Okada M."/>
            <person name="Plessy C."/>
            <person name="Shibata K."/>
            <person name="Shiraki T."/>
            <person name="Suzuki S."/>
            <person name="Tagami M."/>
            <person name="Waki K."/>
            <person name="Watahiki A."/>
            <person name="Okamura-Oho Y."/>
            <person name="Suzuki H."/>
            <person name="Kawai J."/>
            <person name="Hayashizaki Y."/>
        </authorList>
    </citation>
    <scope>NUCLEOTIDE SEQUENCE [LARGE SCALE MRNA]</scope>
    <source>
        <strain>C57BL/6J</strain>
        <tissue>Pancreas</tissue>
    </source>
</reference>
<reference key="3">
    <citation type="journal article" date="2004" name="Genome Res.">
        <title>The status, quality, and expansion of the NIH full-length cDNA project: the Mammalian Gene Collection (MGC).</title>
        <authorList>
            <consortium name="The MGC Project Team"/>
        </authorList>
    </citation>
    <scope>NUCLEOTIDE SEQUENCE [LARGE SCALE MRNA]</scope>
    <source>
        <tissue>Mammary tumor</tissue>
    </source>
</reference>
<reference key="4">
    <citation type="journal article" date="2002" name="Gene">
        <title>Mouse cytosolic and mitochondrial deoxyribonucleotidases: cDNA cloning of the mitochondrial enzyme, gene structures, chromosomal mapping and comparison with the human orthologs.</title>
        <authorList>
            <person name="Rampazzo C."/>
            <person name="Kost-Alimova M."/>
            <person name="Ruzzenente B."/>
            <person name="Dumanski J.P."/>
            <person name="Bianchi V."/>
        </authorList>
    </citation>
    <scope>GENE STRUCTURE</scope>
</reference>
<reference key="5">
    <citation type="journal article" date="2010" name="Cell">
        <title>A tissue-specific atlas of mouse protein phosphorylation and expression.</title>
        <authorList>
            <person name="Huttlin E.L."/>
            <person name="Jedrychowski M.P."/>
            <person name="Elias J.E."/>
            <person name="Goswami T."/>
            <person name="Rad R."/>
            <person name="Beausoleil S.A."/>
            <person name="Villen J."/>
            <person name="Haas W."/>
            <person name="Sowa M.E."/>
            <person name="Gygi S.P."/>
        </authorList>
    </citation>
    <scope>PHOSPHORYLATION [LARGE SCALE ANALYSIS] AT THR-102 AND SER-184</scope>
    <scope>IDENTIFICATION BY MASS SPECTROMETRY [LARGE SCALE ANALYSIS]</scope>
    <source>
        <tissue>Brain</tissue>
        <tissue>Brown adipose tissue</tissue>
        <tissue>Heart</tissue>
        <tissue>Kidney</tissue>
        <tissue>Liver</tissue>
        <tissue>Lung</tissue>
        <tissue>Pancreas</tissue>
        <tissue>Spleen</tissue>
        <tissue>Testis</tissue>
    </source>
</reference>
<reference key="6">
    <citation type="journal article" date="2007" name="Biochemistry">
        <title>Crystal structures of human and murine deoxyribonucleotidases: insights into recognition of substrates and nucleotide analogues.</title>
        <authorList>
            <person name="Wallden K."/>
            <person name="Rinaldo-Matthis A."/>
            <person name="Ruzzenente B."/>
            <person name="Rampazzo C."/>
            <person name="Bianchi V."/>
            <person name="Nordlund P."/>
        </authorList>
    </citation>
    <scope>X-RAY CRYSTALLOGRAPHY (1.94 ANGSTROMS) IN COMPLEXES WITH MAGNESIUM IONS; 2'-DEOXYURIDINE 5'-MONOPHOSPHATE AND 2'-DEOXYGUANOSINE-5'-MONOPHOSPHATE</scope>
    <scope>COFACTOR</scope>
    <scope>SUBUNIT</scope>
</reference>
<sequence length="200" mass="23076">MAVKRPVRVLVDMDGVLADFESGLLQGFRRRFPEEPHVPLEQRRGFLANEQYGALRPDLAEKVASVYESPGFFLNLEPIPGALDALREMNDMKDTEVFICTTPLLKYDHCVGEKYRWVEQNLGPEFVERIILTRDKTVVMGDLLIDDKDNIQGLEETPSWEHILFTCCHNQHLALPPTRRRLLSWSDNWRGIIESKRASL</sequence>
<organism>
    <name type="scientific">Mus musculus</name>
    <name type="common">Mouse</name>
    <dbReference type="NCBI Taxonomy" id="10090"/>
    <lineage>
        <taxon>Eukaryota</taxon>
        <taxon>Metazoa</taxon>
        <taxon>Chordata</taxon>
        <taxon>Craniata</taxon>
        <taxon>Vertebrata</taxon>
        <taxon>Euteleostomi</taxon>
        <taxon>Mammalia</taxon>
        <taxon>Eutheria</taxon>
        <taxon>Euarchontoglires</taxon>
        <taxon>Glires</taxon>
        <taxon>Rodentia</taxon>
        <taxon>Myomorpha</taxon>
        <taxon>Muroidea</taxon>
        <taxon>Muridae</taxon>
        <taxon>Murinae</taxon>
        <taxon>Mus</taxon>
        <taxon>Mus</taxon>
    </lineage>
</organism>